<reference key="1">
    <citation type="journal article" date="2000" name="Nature">
        <title>Sequence and analysis of chromosome 5 of the plant Arabidopsis thaliana.</title>
        <authorList>
            <person name="Tabata S."/>
            <person name="Kaneko T."/>
            <person name="Nakamura Y."/>
            <person name="Kotani H."/>
            <person name="Kato T."/>
            <person name="Asamizu E."/>
            <person name="Miyajima N."/>
            <person name="Sasamoto S."/>
            <person name="Kimura T."/>
            <person name="Hosouchi T."/>
            <person name="Kawashima K."/>
            <person name="Kohara M."/>
            <person name="Matsumoto M."/>
            <person name="Matsuno A."/>
            <person name="Muraki A."/>
            <person name="Nakayama S."/>
            <person name="Nakazaki N."/>
            <person name="Naruo K."/>
            <person name="Okumura S."/>
            <person name="Shinpo S."/>
            <person name="Takeuchi C."/>
            <person name="Wada T."/>
            <person name="Watanabe A."/>
            <person name="Yamada M."/>
            <person name="Yasuda M."/>
            <person name="Sato S."/>
            <person name="de la Bastide M."/>
            <person name="Huang E."/>
            <person name="Spiegel L."/>
            <person name="Gnoj L."/>
            <person name="O'Shaughnessy A."/>
            <person name="Preston R."/>
            <person name="Habermann K."/>
            <person name="Murray J."/>
            <person name="Johnson D."/>
            <person name="Rohlfing T."/>
            <person name="Nelson J."/>
            <person name="Stoneking T."/>
            <person name="Pepin K."/>
            <person name="Spieth J."/>
            <person name="Sekhon M."/>
            <person name="Armstrong J."/>
            <person name="Becker M."/>
            <person name="Belter E."/>
            <person name="Cordum H."/>
            <person name="Cordes M."/>
            <person name="Courtney L."/>
            <person name="Courtney W."/>
            <person name="Dante M."/>
            <person name="Du H."/>
            <person name="Edwards J."/>
            <person name="Fryman J."/>
            <person name="Haakensen B."/>
            <person name="Lamar E."/>
            <person name="Latreille P."/>
            <person name="Leonard S."/>
            <person name="Meyer R."/>
            <person name="Mulvaney E."/>
            <person name="Ozersky P."/>
            <person name="Riley A."/>
            <person name="Strowmatt C."/>
            <person name="Wagner-McPherson C."/>
            <person name="Wollam A."/>
            <person name="Yoakum M."/>
            <person name="Bell M."/>
            <person name="Dedhia N."/>
            <person name="Parnell L."/>
            <person name="Shah R."/>
            <person name="Rodriguez M."/>
            <person name="Hoon See L."/>
            <person name="Vil D."/>
            <person name="Baker J."/>
            <person name="Kirchoff K."/>
            <person name="Toth K."/>
            <person name="King L."/>
            <person name="Bahret A."/>
            <person name="Miller B."/>
            <person name="Marra M.A."/>
            <person name="Martienssen R."/>
            <person name="McCombie W.R."/>
            <person name="Wilson R.K."/>
            <person name="Murphy G."/>
            <person name="Bancroft I."/>
            <person name="Volckaert G."/>
            <person name="Wambutt R."/>
            <person name="Duesterhoeft A."/>
            <person name="Stiekema W."/>
            <person name="Pohl T."/>
            <person name="Entian K.-D."/>
            <person name="Terryn N."/>
            <person name="Hartley N."/>
            <person name="Bent E."/>
            <person name="Johnson S."/>
            <person name="Langham S.-A."/>
            <person name="McCullagh B."/>
            <person name="Robben J."/>
            <person name="Grymonprez B."/>
            <person name="Zimmermann W."/>
            <person name="Ramsperger U."/>
            <person name="Wedler H."/>
            <person name="Balke K."/>
            <person name="Wedler E."/>
            <person name="Peters S."/>
            <person name="van Staveren M."/>
            <person name="Dirkse W."/>
            <person name="Mooijman P."/>
            <person name="Klein Lankhorst R."/>
            <person name="Weitzenegger T."/>
            <person name="Bothe G."/>
            <person name="Rose M."/>
            <person name="Hauf J."/>
            <person name="Berneiser S."/>
            <person name="Hempel S."/>
            <person name="Feldpausch M."/>
            <person name="Lamberth S."/>
            <person name="Villarroel R."/>
            <person name="Gielen J."/>
            <person name="Ardiles W."/>
            <person name="Bents O."/>
            <person name="Lemcke K."/>
            <person name="Kolesov G."/>
            <person name="Mayer K.F.X."/>
            <person name="Rudd S."/>
            <person name="Schoof H."/>
            <person name="Schueller C."/>
            <person name="Zaccaria P."/>
            <person name="Mewes H.-W."/>
            <person name="Bevan M."/>
            <person name="Fransz P.F."/>
        </authorList>
    </citation>
    <scope>NUCLEOTIDE SEQUENCE [LARGE SCALE GENOMIC DNA]</scope>
    <source>
        <strain>cv. Columbia</strain>
    </source>
</reference>
<reference key="2">
    <citation type="journal article" date="2017" name="Plant J.">
        <title>Araport11: a complete reannotation of the Arabidopsis thaliana reference genome.</title>
        <authorList>
            <person name="Cheng C.Y."/>
            <person name="Krishnakumar V."/>
            <person name="Chan A.P."/>
            <person name="Thibaud-Nissen F."/>
            <person name="Schobel S."/>
            <person name="Town C.D."/>
        </authorList>
    </citation>
    <scope>GENOME REANNOTATION</scope>
    <source>
        <strain>cv. Columbia</strain>
    </source>
</reference>
<reference key="3">
    <citation type="journal article" date="2001" name="J. Biol. Chem.">
        <title>The Arabidopsis thaliana ABC protein superfamily, a complete inventory.</title>
        <authorList>
            <person name="Sanchez-Fernandez R."/>
            <person name="Davies T.G."/>
            <person name="Coleman J.O."/>
            <person name="Rea P.A."/>
        </authorList>
    </citation>
    <scope>GENE FAMILY</scope>
    <scope>NOMENCLATURE</scope>
</reference>
<reference key="4">
    <citation type="journal article" date="2008" name="Trends Plant Sci.">
        <title>Plant ABC proteins - a unified nomenclature and updated inventory.</title>
        <authorList>
            <person name="Verrier P.J."/>
            <person name="Bird D."/>
            <person name="Burla B."/>
            <person name="Dassa E."/>
            <person name="Forestier C."/>
            <person name="Geisler M."/>
            <person name="Klein M."/>
            <person name="Kolukisaoglu H.U."/>
            <person name="Lee Y."/>
            <person name="Martinoia E."/>
            <person name="Murphy A."/>
            <person name="Rea P.A."/>
            <person name="Samuels L."/>
            <person name="Schulz B."/>
            <person name="Spalding E.J."/>
            <person name="Yazaki K."/>
            <person name="Theodoulou F.L."/>
        </authorList>
    </citation>
    <scope>GENE FAMILY</scope>
    <scope>NOMENCLATURE</scope>
</reference>
<feature type="chain" id="PRO_0000240695" description="ABC transporter G family member 23">
    <location>
        <begin position="1"/>
        <end position="624"/>
    </location>
</feature>
<feature type="transmembrane region" description="Helical" evidence="2">
    <location>
        <begin position="369"/>
        <end position="389"/>
    </location>
</feature>
<feature type="transmembrane region" description="Helical" evidence="2">
    <location>
        <begin position="402"/>
        <end position="422"/>
    </location>
</feature>
<feature type="transmembrane region" description="Helical" evidence="2">
    <location>
        <begin position="450"/>
        <end position="470"/>
    </location>
</feature>
<feature type="transmembrane region" description="Helical" evidence="2">
    <location>
        <begin position="480"/>
        <end position="500"/>
    </location>
</feature>
<feature type="transmembrane region" description="Helical" evidence="2">
    <location>
        <begin position="511"/>
        <end position="531"/>
    </location>
</feature>
<feature type="transmembrane region" description="Helical" evidence="2">
    <location>
        <begin position="595"/>
        <end position="615"/>
    </location>
</feature>
<feature type="domain" description="ABC transporter" evidence="3">
    <location>
        <begin position="52"/>
        <end position="296"/>
    </location>
</feature>
<feature type="domain" description="ABC transmembrane type-2">
    <location>
        <begin position="350"/>
        <end position="560"/>
    </location>
</feature>
<feature type="binding site" evidence="3">
    <location>
        <begin position="84"/>
        <end position="91"/>
    </location>
    <ligand>
        <name>ATP</name>
        <dbReference type="ChEBI" id="CHEBI:30616"/>
    </ligand>
</feature>
<accession>Q3E9B8</accession>
<sequence length="624" mass="69934">MASCFHPSAMATSHREEDSIILFSASNSPDEFSSASSSFSSSPLPTPNRYSLTVTNLSYTINHTPILNSVSLAAESSKILAVVGPSGTGKSTLLKIISGRVNHKALDPSSAVLMNNRKITDYNQLRRLCGFVPQDDDLLPLLTVKETLMYSAKFSLRDSTAKEREERVESLLSDLGLVLVQDSFVGEGDEEDRGVSGGERKRVSIAVEMIRDPPILLLDEPTSGLDSRNSLQVVELLATMAKSKQRTVLFSIHQPSYRILDYISDYLILSRGSVIHLGSLEHLEDSIAKLGFQIPEQLNPIEFAMEIVESLRTFKPNSVAVVESSSMWPENNENDGIISKKEAFRVLDVTEISYLCSRFCKIIYRTKQLFLARTMQAVVAGLGLGSVYTRLKRDEEGVAERLGLFAFSLSFLLSSTVEALPIYLRERRVLMKESSRGSYRISSYMIANTIAFVPFLFVVSLLFSIPVYWIVGLNPSIQAFSFFVLCVWLIILMASSLVLFLSAVSPDFISGNSLICTVLGAFFLFSGYFIPKEKIPKPWMFMYYVSLYRYPLESMVVNEYWSMREECFSSGNMGCLMTGEDVLKERGLDKDTRWINVGIMLAFFVFYRILCWGILLRKASKSTH</sequence>
<dbReference type="EMBL" id="AF296837">
    <property type="status" value="NOT_ANNOTATED_CDS"/>
    <property type="molecule type" value="Genomic_DNA"/>
</dbReference>
<dbReference type="EMBL" id="CP002688">
    <property type="protein sequence ID" value="AED92702.1"/>
    <property type="molecule type" value="Genomic_DNA"/>
</dbReference>
<dbReference type="RefSeq" id="NP_001318598.1">
    <property type="nucleotide sequence ID" value="NM_001343599.1"/>
</dbReference>
<dbReference type="SMR" id="Q3E9B8"/>
<dbReference type="BioGRID" id="17337">
    <property type="interactions" value="13"/>
</dbReference>
<dbReference type="FunCoup" id="Q3E9B8">
    <property type="interactions" value="66"/>
</dbReference>
<dbReference type="IntAct" id="Q3E9B8">
    <property type="interactions" value="13"/>
</dbReference>
<dbReference type="STRING" id="3702.Q3E9B8"/>
<dbReference type="PaxDb" id="3702-AT5G19410.1"/>
<dbReference type="ProteomicsDB" id="244618"/>
<dbReference type="EnsemblPlants" id="AT5G19410.1">
    <property type="protein sequence ID" value="AT5G19410.1"/>
    <property type="gene ID" value="AT5G19410"/>
</dbReference>
<dbReference type="GeneID" id="832061"/>
<dbReference type="Gramene" id="AT5G19410.1">
    <property type="protein sequence ID" value="AT5G19410.1"/>
    <property type="gene ID" value="AT5G19410"/>
</dbReference>
<dbReference type="KEGG" id="ath:AT5G19410"/>
<dbReference type="Araport" id="AT5G19410"/>
<dbReference type="TAIR" id="AT5G19410">
    <property type="gene designation" value="ABCG23"/>
</dbReference>
<dbReference type="eggNOG" id="KOG0061">
    <property type="taxonomic scope" value="Eukaryota"/>
</dbReference>
<dbReference type="HOGENOM" id="CLU_000604_57_8_1"/>
<dbReference type="InParanoid" id="Q3E9B8"/>
<dbReference type="OMA" id="YRLLCWI"/>
<dbReference type="PhylomeDB" id="Q3E9B8"/>
<dbReference type="PRO" id="PR:Q3E9B8"/>
<dbReference type="Proteomes" id="UP000006548">
    <property type="component" value="Chromosome 5"/>
</dbReference>
<dbReference type="ExpressionAtlas" id="Q3E9B8">
    <property type="expression patterns" value="baseline and differential"/>
</dbReference>
<dbReference type="GO" id="GO:0016020">
    <property type="term" value="C:membrane"/>
    <property type="evidence" value="ECO:0007669"/>
    <property type="project" value="UniProtKB-SubCell"/>
</dbReference>
<dbReference type="GO" id="GO:0140359">
    <property type="term" value="F:ABC-type transporter activity"/>
    <property type="evidence" value="ECO:0007669"/>
    <property type="project" value="InterPro"/>
</dbReference>
<dbReference type="GO" id="GO:0005524">
    <property type="term" value="F:ATP binding"/>
    <property type="evidence" value="ECO:0007669"/>
    <property type="project" value="UniProtKB-KW"/>
</dbReference>
<dbReference type="GO" id="GO:0016887">
    <property type="term" value="F:ATP hydrolysis activity"/>
    <property type="evidence" value="ECO:0007669"/>
    <property type="project" value="InterPro"/>
</dbReference>
<dbReference type="FunFam" id="3.40.50.300:FF:001409">
    <property type="entry name" value="ABC transporter G family member 23"/>
    <property type="match status" value="1"/>
</dbReference>
<dbReference type="Gene3D" id="3.40.50.300">
    <property type="entry name" value="P-loop containing nucleotide triphosphate hydrolases"/>
    <property type="match status" value="1"/>
</dbReference>
<dbReference type="InterPro" id="IPR003593">
    <property type="entry name" value="AAA+_ATPase"/>
</dbReference>
<dbReference type="InterPro" id="IPR013525">
    <property type="entry name" value="ABC2_TM"/>
</dbReference>
<dbReference type="InterPro" id="IPR003439">
    <property type="entry name" value="ABC_transporter-like_ATP-bd"/>
</dbReference>
<dbReference type="InterPro" id="IPR017871">
    <property type="entry name" value="ABC_transporter-like_CS"/>
</dbReference>
<dbReference type="InterPro" id="IPR043926">
    <property type="entry name" value="ABCG_dom"/>
</dbReference>
<dbReference type="InterPro" id="IPR050352">
    <property type="entry name" value="ABCG_transporters"/>
</dbReference>
<dbReference type="InterPro" id="IPR027417">
    <property type="entry name" value="P-loop_NTPase"/>
</dbReference>
<dbReference type="PANTHER" id="PTHR48041:SF51">
    <property type="entry name" value="ABC TRANSPORTER G FAMILY MEMBER 23"/>
    <property type="match status" value="1"/>
</dbReference>
<dbReference type="PANTHER" id="PTHR48041">
    <property type="entry name" value="ABC TRANSPORTER G FAMILY MEMBER 28"/>
    <property type="match status" value="1"/>
</dbReference>
<dbReference type="Pfam" id="PF01061">
    <property type="entry name" value="ABC2_membrane"/>
    <property type="match status" value="1"/>
</dbReference>
<dbReference type="Pfam" id="PF19055">
    <property type="entry name" value="ABC2_membrane_7"/>
    <property type="match status" value="1"/>
</dbReference>
<dbReference type="Pfam" id="PF00005">
    <property type="entry name" value="ABC_tran"/>
    <property type="match status" value="1"/>
</dbReference>
<dbReference type="SMART" id="SM00382">
    <property type="entry name" value="AAA"/>
    <property type="match status" value="1"/>
</dbReference>
<dbReference type="SUPFAM" id="SSF52540">
    <property type="entry name" value="P-loop containing nucleoside triphosphate hydrolases"/>
    <property type="match status" value="1"/>
</dbReference>
<dbReference type="PROSITE" id="PS00211">
    <property type="entry name" value="ABC_TRANSPORTER_1"/>
    <property type="match status" value="1"/>
</dbReference>
<dbReference type="PROSITE" id="PS50893">
    <property type="entry name" value="ABC_TRANSPORTER_2"/>
    <property type="match status" value="1"/>
</dbReference>
<name>AB23G_ARATH</name>
<organism>
    <name type="scientific">Arabidopsis thaliana</name>
    <name type="common">Mouse-ear cress</name>
    <dbReference type="NCBI Taxonomy" id="3702"/>
    <lineage>
        <taxon>Eukaryota</taxon>
        <taxon>Viridiplantae</taxon>
        <taxon>Streptophyta</taxon>
        <taxon>Embryophyta</taxon>
        <taxon>Tracheophyta</taxon>
        <taxon>Spermatophyta</taxon>
        <taxon>Magnoliopsida</taxon>
        <taxon>eudicotyledons</taxon>
        <taxon>Gunneridae</taxon>
        <taxon>Pentapetalae</taxon>
        <taxon>rosids</taxon>
        <taxon>malvids</taxon>
        <taxon>Brassicales</taxon>
        <taxon>Brassicaceae</taxon>
        <taxon>Camelineae</taxon>
        <taxon>Arabidopsis</taxon>
    </lineage>
</organism>
<comment type="subcellular location">
    <subcellularLocation>
        <location evidence="1">Membrane</location>
        <topology evidence="1">Multi-pass membrane protein</topology>
    </subcellularLocation>
</comment>
<comment type="similarity">
    <text evidence="4">Belongs to the ABC transporter superfamily. ABCG family. Eye pigment precursor importer (TC 3.A.1.204) subfamily.</text>
</comment>
<proteinExistence type="evidence at transcript level"/>
<protein>
    <recommendedName>
        <fullName>ABC transporter G family member 23</fullName>
        <shortName>ABC transporter ABCG.23</shortName>
        <shortName>AtABCG23</shortName>
    </recommendedName>
    <alternativeName>
        <fullName>Probable white-brown complex homolog protein 24</fullName>
        <shortName>AtWBC24</shortName>
    </alternativeName>
</protein>
<keyword id="KW-0067">ATP-binding</keyword>
<keyword id="KW-0472">Membrane</keyword>
<keyword id="KW-0547">Nucleotide-binding</keyword>
<keyword id="KW-1185">Reference proteome</keyword>
<keyword id="KW-0812">Transmembrane</keyword>
<keyword id="KW-1133">Transmembrane helix</keyword>
<keyword id="KW-0813">Transport</keyword>
<gene>
    <name type="primary">ABCG23</name>
    <name type="synonym">WBC24</name>
    <name type="ordered locus">At5g19410</name>
    <name type="ORF">F7K24.160</name>
</gene>
<evidence type="ECO:0000250" key="1"/>
<evidence type="ECO:0000255" key="2"/>
<evidence type="ECO:0000255" key="3">
    <source>
        <dbReference type="PROSITE-ProRule" id="PRU00434"/>
    </source>
</evidence>
<evidence type="ECO:0000305" key="4"/>